<keyword id="KW-0010">Activator</keyword>
<keyword id="KW-0539">Nucleus</keyword>
<keyword id="KW-1185">Reference proteome</keyword>
<keyword id="KW-0678">Repressor</keyword>
<keyword id="KW-0804">Transcription</keyword>
<keyword id="KW-0805">Transcription regulation</keyword>
<gene>
    <name type="primary">SSN2</name>
    <name type="synonym">MED13</name>
    <name type="ordered locus">AER323W</name>
</gene>
<organism>
    <name type="scientific">Eremothecium gossypii (strain ATCC 10895 / CBS 109.51 / FGSC 9923 / NRRL Y-1056)</name>
    <name type="common">Yeast</name>
    <name type="synonym">Ashbya gossypii</name>
    <dbReference type="NCBI Taxonomy" id="284811"/>
    <lineage>
        <taxon>Eukaryota</taxon>
        <taxon>Fungi</taxon>
        <taxon>Dikarya</taxon>
        <taxon>Ascomycota</taxon>
        <taxon>Saccharomycotina</taxon>
        <taxon>Saccharomycetes</taxon>
        <taxon>Saccharomycetales</taxon>
        <taxon>Saccharomycetaceae</taxon>
        <taxon>Eremothecium</taxon>
    </lineage>
</organism>
<feature type="chain" id="PRO_0000314245" description="Mediator of RNA polymerase II transcription subunit 13">
    <location>
        <begin position="1"/>
        <end position="1357"/>
    </location>
</feature>
<feature type="region of interest" description="Disordered" evidence="2">
    <location>
        <begin position="356"/>
        <end position="391"/>
    </location>
</feature>
<feature type="region of interest" description="Disordered" evidence="2">
    <location>
        <begin position="420"/>
        <end position="487"/>
    </location>
</feature>
<feature type="compositionally biased region" description="Polar residues" evidence="2">
    <location>
        <begin position="435"/>
        <end position="451"/>
    </location>
</feature>
<comment type="function">
    <text evidence="1">Component of the SRB8-11 complex. The SRB8-11 complex is a regulatory module of the Mediator complex which is itself involved in regulation of basal and activated RNA polymerase II-dependent transcription. The SRB8-11 complex may be involved in the transcriptional repression of a subset of genes regulated by Mediator. It may inhibit the association of the Mediator complex with RNA polymerase II to form the holoenzyme complex (By similarity).</text>
</comment>
<comment type="subunit">
    <text evidence="1">Component of the SRB8-11 complex, which itself associates with the Mediator complex.</text>
</comment>
<comment type="subcellular location">
    <subcellularLocation>
        <location evidence="3">Nucleus</location>
    </subcellularLocation>
</comment>
<comment type="similarity">
    <text evidence="3">Belongs to the Mediator complex subunit 13 family.</text>
</comment>
<dbReference type="EMBL" id="AE016818">
    <property type="protein sequence ID" value="AAS53003.1"/>
    <property type="molecule type" value="Genomic_DNA"/>
</dbReference>
<dbReference type="RefSeq" id="NP_985179.1">
    <property type="nucleotide sequence ID" value="NM_210533.1"/>
</dbReference>
<dbReference type="SMR" id="Q756F6"/>
<dbReference type="FunCoup" id="Q756F6">
    <property type="interactions" value="152"/>
</dbReference>
<dbReference type="STRING" id="284811.Q756F6"/>
<dbReference type="EnsemblFungi" id="AAS53003">
    <property type="protein sequence ID" value="AAS53003"/>
    <property type="gene ID" value="AGOS_AER323W"/>
</dbReference>
<dbReference type="GeneID" id="4621392"/>
<dbReference type="KEGG" id="ago:AGOS_AER323W"/>
<dbReference type="eggNOG" id="KOG3600">
    <property type="taxonomic scope" value="Eukaryota"/>
</dbReference>
<dbReference type="HOGENOM" id="CLU_242296_0_0_1"/>
<dbReference type="InParanoid" id="Q756F6"/>
<dbReference type="OMA" id="FSRELWC"/>
<dbReference type="OrthoDB" id="103819at2759"/>
<dbReference type="Proteomes" id="UP000000591">
    <property type="component" value="Chromosome V"/>
</dbReference>
<dbReference type="GO" id="GO:1990508">
    <property type="term" value="C:CKM complex"/>
    <property type="evidence" value="ECO:0007669"/>
    <property type="project" value="EnsemblFungi"/>
</dbReference>
<dbReference type="GO" id="GO:0016592">
    <property type="term" value="C:mediator complex"/>
    <property type="evidence" value="ECO:0000318"/>
    <property type="project" value="GO_Central"/>
</dbReference>
<dbReference type="GO" id="GO:0030332">
    <property type="term" value="F:cyclin binding"/>
    <property type="evidence" value="ECO:0007669"/>
    <property type="project" value="EnsemblFungi"/>
</dbReference>
<dbReference type="GO" id="GO:0003713">
    <property type="term" value="F:transcription coactivator activity"/>
    <property type="evidence" value="ECO:0000318"/>
    <property type="project" value="GO_Central"/>
</dbReference>
<dbReference type="GO" id="GO:0000122">
    <property type="term" value="P:negative regulation of transcription by RNA polymerase II"/>
    <property type="evidence" value="ECO:0007669"/>
    <property type="project" value="EnsemblFungi"/>
</dbReference>
<dbReference type="GO" id="GO:0045944">
    <property type="term" value="P:positive regulation of transcription by RNA polymerase II"/>
    <property type="evidence" value="ECO:0000318"/>
    <property type="project" value="GO_Central"/>
</dbReference>
<dbReference type="InterPro" id="IPR009401">
    <property type="entry name" value="Med13_C"/>
</dbReference>
<dbReference type="InterPro" id="IPR051139">
    <property type="entry name" value="Mediator_complx_sub13"/>
</dbReference>
<dbReference type="InterPro" id="IPR021643">
    <property type="entry name" value="Mediator_Med13_N"/>
</dbReference>
<dbReference type="PANTHER" id="PTHR48249">
    <property type="entry name" value="MEDIATOR OF RNA POLYMERASE II TRANSCRIPTION SUBUNIT 13"/>
    <property type="match status" value="1"/>
</dbReference>
<dbReference type="PANTHER" id="PTHR48249:SF3">
    <property type="entry name" value="MEDIATOR OF RNA POLYMERASE II TRANSCRIPTION SUBUNIT 13"/>
    <property type="match status" value="1"/>
</dbReference>
<dbReference type="Pfam" id="PF06333">
    <property type="entry name" value="Med13_C"/>
    <property type="match status" value="2"/>
</dbReference>
<dbReference type="Pfam" id="PF11597">
    <property type="entry name" value="Med13_N"/>
    <property type="match status" value="1"/>
</dbReference>
<name>SSN2_EREGS</name>
<accession>Q756F6</accession>
<proteinExistence type="inferred from homology"/>
<sequence length="1357" mass="153091">MDILETSFRLEDVLSSYYRVEKVVRVNYQQFVPRTPDDQWCIQSELLIRKKDPKALVALFSRELWCFSINDQDLPMPGLEGIGEPPNSEKKGHFTPGFSKPNLPTPYAIFLKALRRMIHINMCLRSQNRLVPFGNTCIFQRDEKASSVIHFDSHLFENGDLTVSLCTKDMGFERLLSGAFTGRQVKRALYLAPSGIRAYLPFPDISKCLVAPPKNAHLLLVTLLVSHGIDLTQAKDLKWIKLVPNINHLNGYTPTISRYAEESQTSKSVIWPMDLCFQQTPADACVNTTRATPLDIGLQDSFDLIEDFIQLKLTSAYRIPGTSVNANTATGNNPLSTGGGFTDQFQPFVKHTNSSSCNYGPASRTKLTPSKAQDLRRSAAPLSADSFGNGFMTTPNVNENMGSVIDDMVICPSSVKSQNDLWNDRKSSNDDIDSINPTSQQGDSARITSGSEEQDVEVTFDKDLFGDEDDESDLFGDSSNKSTHRKEVREITDEMFDSAEIESDPEGKITPTGTSINYSTQQQTPLKRKYLDIPLDEITLPAAPLYTDPGAPLPVETPRDRRKSVFAPLNFNPMIESNVDNKYKNGGKFSFDPNEIDEPLKFEVSTTNISSSEEDDSEFSGDDFDELQQNNLQDIRAMEVGSSLQQYDMGRPINEFLNQSDSAKEDYLLPAYQSGDVIDVDKFPSRESHLDQIWKSPEINREDTPHRIGLPIIKPQLDGSGNLDIDNQITDNCSSNYYEPTPVVGADEKIQERTLHKDKKLDQQGDSAMASVVGDYSLAIKETRESSNGLPFLLRHMPLFSIPDVFLSKNPIVKVDSKLEDFLEILCEQLVFDQGFLGNFDVDPPTYKDVKLNEKGVIRETLNSVFSEFERLRGNEIISDMFYIKQPSVCVKKHGNLIKLKSDAESFAPLLHLKPSRGMKSFRGLFLTTILTQTCVSFITELAHIYSAQELGFCELVKLTNDEHNGLIVLNNFNTDTLLLLSAQIVSYCSTNMNNVKNIPLMIFLPVAPSSLEATITMTSKFQLIKNEVKSRLPDVELLLKLIPFDLTKDPVIMIDRYYELCRGIYNLLPPRTVKFASIADNLPEQVEFRTSAGNQNQLSHYDSYIHLAYTRSIDREWLAAAWSDSKGTENMVKAWYLGNSKARFETACNELWKLTVELASRKYGRICLILTRMDSVLPDDELMHWRRLSVTTRNLHLAVVCVGASTKVSLYDEDQFYPSFKPLFKDKRYANKIQANQLDDYEVVNIDEELHGVVFSSPLQLANSQHRCAIKSGALVRFKRCAGGDTLDKFEVNLLNCPHSDSTKLLKTILHQFRDIASLNTWFCISRGKDNYIPWHVVAVKKIMRFIIHVNGIEEK</sequence>
<reference key="1">
    <citation type="journal article" date="2004" name="Science">
        <title>The Ashbya gossypii genome as a tool for mapping the ancient Saccharomyces cerevisiae genome.</title>
        <authorList>
            <person name="Dietrich F.S."/>
            <person name="Voegeli S."/>
            <person name="Brachat S."/>
            <person name="Lerch A."/>
            <person name="Gates K."/>
            <person name="Steiner S."/>
            <person name="Mohr C."/>
            <person name="Poehlmann R."/>
            <person name="Luedi P."/>
            <person name="Choi S."/>
            <person name="Wing R.A."/>
            <person name="Flavier A."/>
            <person name="Gaffney T.D."/>
            <person name="Philippsen P."/>
        </authorList>
    </citation>
    <scope>NUCLEOTIDE SEQUENCE [LARGE SCALE GENOMIC DNA]</scope>
    <source>
        <strain>ATCC 10895 / CBS 109.51 / FGSC 9923 / NRRL Y-1056</strain>
    </source>
</reference>
<reference key="2">
    <citation type="journal article" date="2013" name="G3 (Bethesda)">
        <title>Genomes of Ashbya fungi isolated from insects reveal four mating-type loci, numerous translocations, lack of transposons, and distinct gene duplications.</title>
        <authorList>
            <person name="Dietrich F.S."/>
            <person name="Voegeli S."/>
            <person name="Kuo S."/>
            <person name="Philippsen P."/>
        </authorList>
    </citation>
    <scope>GENOME REANNOTATION</scope>
    <source>
        <strain>ATCC 10895 / CBS 109.51 / FGSC 9923 / NRRL Y-1056</strain>
    </source>
</reference>
<evidence type="ECO:0000250" key="1"/>
<evidence type="ECO:0000256" key="2">
    <source>
        <dbReference type="SAM" id="MobiDB-lite"/>
    </source>
</evidence>
<evidence type="ECO:0000305" key="3"/>
<protein>
    <recommendedName>
        <fullName>Mediator of RNA polymerase II transcription subunit 13</fullName>
    </recommendedName>
    <alternativeName>
        <fullName>Mediator complex subunit 13</fullName>
    </alternativeName>
</protein>